<gene>
    <name evidence="15" type="primary">Lsr</name>
    <name type="synonym">Ildr3</name>
    <name type="synonym">Lisch7</name>
</gene>
<organism>
    <name type="scientific">Mus musculus</name>
    <name type="common">Mouse</name>
    <dbReference type="NCBI Taxonomy" id="10090"/>
    <lineage>
        <taxon>Eukaryota</taxon>
        <taxon>Metazoa</taxon>
        <taxon>Chordata</taxon>
        <taxon>Craniata</taxon>
        <taxon>Vertebrata</taxon>
        <taxon>Euteleostomi</taxon>
        <taxon>Mammalia</taxon>
        <taxon>Eutheria</taxon>
        <taxon>Euarchontoglires</taxon>
        <taxon>Glires</taxon>
        <taxon>Rodentia</taxon>
        <taxon>Myomorpha</taxon>
        <taxon>Muroidea</taxon>
        <taxon>Muridae</taxon>
        <taxon>Murinae</taxon>
        <taxon>Mus</taxon>
        <taxon>Mus</taxon>
    </lineage>
</organism>
<feature type="signal peptide" evidence="4">
    <location>
        <begin position="1"/>
        <end position="35"/>
    </location>
</feature>
<feature type="chain" id="PRO_0000245309" description="Lipolysis-stimulated lipoprotein receptor">
    <location>
        <begin position="36"/>
        <end position="594"/>
    </location>
</feature>
<feature type="topological domain" description="Extracellular" evidence="4">
    <location>
        <begin position="36"/>
        <end position="206"/>
    </location>
</feature>
<feature type="transmembrane region" description="Helical" evidence="4">
    <location>
        <begin position="207"/>
        <end position="227"/>
    </location>
</feature>
<feature type="topological domain" description="Cytoplasmic" evidence="4">
    <location>
        <begin position="228"/>
        <end position="594"/>
    </location>
</feature>
<feature type="domain" description="Ig-like V-type">
    <location>
        <begin position="89"/>
        <end position="181"/>
    </location>
</feature>
<feature type="region of interest" description="Disordered" evidence="6">
    <location>
        <begin position="375"/>
        <end position="594"/>
    </location>
</feature>
<feature type="compositionally biased region" description="Basic and acidic residues" evidence="6">
    <location>
        <begin position="375"/>
        <end position="387"/>
    </location>
</feature>
<feature type="compositionally biased region" description="Basic and acidic residues" evidence="6">
    <location>
        <begin position="435"/>
        <end position="444"/>
    </location>
</feature>
<feature type="compositionally biased region" description="Low complexity" evidence="6">
    <location>
        <begin position="445"/>
        <end position="460"/>
    </location>
</feature>
<feature type="compositionally biased region" description="Basic and acidic residues" evidence="6">
    <location>
        <begin position="472"/>
        <end position="550"/>
    </location>
</feature>
<feature type="modified residue" description="Phosphothreonine" evidence="3">
    <location>
        <position position="283"/>
    </location>
</feature>
<feature type="modified residue" description="Phosphoserine; by MAPK8 and MAPK9" evidence="10 16">
    <location>
        <position position="308"/>
    </location>
</feature>
<feature type="modified residue" description="Phosphoserine" evidence="2">
    <location>
        <position position="314"/>
    </location>
</feature>
<feature type="modified residue" description="Phosphoserine" evidence="2">
    <location>
        <position position="332"/>
    </location>
</feature>
<feature type="modified residue" description="Phosphoserine" evidence="17">
    <location>
        <position position="375"/>
    </location>
</feature>
<feature type="modified residue" description="Phosphoserine" evidence="17">
    <location>
        <position position="379"/>
    </location>
</feature>
<feature type="modified residue" description="Phosphothreonine" evidence="2">
    <location>
        <position position="396"/>
    </location>
</feature>
<feature type="modified residue" description="Phosphoserine" evidence="2">
    <location>
        <position position="407"/>
    </location>
</feature>
<feature type="modified residue" description="Phosphoserine" evidence="2">
    <location>
        <position position="410"/>
    </location>
</feature>
<feature type="modified residue" description="Phosphoserine" evidence="2">
    <location>
        <position position="436"/>
    </location>
</feature>
<feature type="modified residue" description="Phosphoserine" evidence="2">
    <location>
        <position position="471"/>
    </location>
</feature>
<feature type="modified residue" description="Phosphoserine" evidence="2">
    <location>
        <position position="473"/>
    </location>
</feature>
<feature type="modified residue" description="Phosphotyrosine" evidence="2">
    <location>
        <position position="478"/>
    </location>
</feature>
<feature type="modified residue" description="Phosphoserine" evidence="2">
    <location>
        <position position="576"/>
    </location>
</feature>
<feature type="modified residue" description="Phosphoserine" evidence="16">
    <location>
        <position position="588"/>
    </location>
</feature>
<feature type="modified residue" description="Phosphoserine" evidence="2">
    <location>
        <position position="591"/>
    </location>
</feature>
<feature type="disulfide bond" evidence="5">
    <location>
        <begin position="113"/>
        <end position="165"/>
    </location>
</feature>
<feature type="cross-link" description="Glycyl lysine isopeptide (Lys-Gly) (interchain with G-Cter in ubiquitin)" evidence="2">
    <location>
        <position position="583"/>
    </location>
</feature>
<feature type="splice variant" id="VSP_019695" description="In isoform 3." evidence="12">
    <original>GRTSEAPELLPGFRAGPLEDWLFVVVVCLASLLFFLLLGICWCQCCPHTCCCYVRCPCCPDKCCCPEAL</original>
    <variation>V</variation>
    <location>
        <begin position="187"/>
        <end position="255"/>
    </location>
</feature>
<feature type="splice variant" id="VSP_019696" description="In isoform 2." evidence="12">
    <location>
        <begin position="187"/>
        <end position="205"/>
    </location>
</feature>
<feature type="mutagenesis site" description="Decreased phosphorylation levels." evidence="10">
    <original>S</original>
    <variation>A</variation>
    <location>
        <position position="308"/>
    </location>
</feature>
<feature type="sequence conflict" description="In Ref. 1; AAA92720." evidence="14" ref="1">
    <original>P</original>
    <variation>T</variation>
    <location>
        <position position="423"/>
    </location>
</feature>
<feature type="sequence conflict" description="In Ref. 2; BAE39548." evidence="14" ref="2">
    <original>P</original>
    <variation>H</variation>
    <location>
        <position position="456"/>
    </location>
</feature>
<feature type="sequence conflict" description="In Ref. 1; AAA92720." evidence="14" ref="1">
    <original>R</original>
    <variation>L</variation>
    <location>
        <position position="579"/>
    </location>
</feature>
<dbReference type="EMBL" id="U49507">
    <property type="protein sequence ID" value="AAA92719.1"/>
    <property type="status" value="ALT_FRAME"/>
    <property type="molecule type" value="mRNA"/>
</dbReference>
<dbReference type="EMBL" id="U49508">
    <property type="protein sequence ID" value="AAA92720.1"/>
    <property type="molecule type" value="Genomic_DNA"/>
</dbReference>
<dbReference type="EMBL" id="AK146807">
    <property type="protein sequence ID" value="BAE27447.1"/>
    <property type="molecule type" value="mRNA"/>
</dbReference>
<dbReference type="EMBL" id="AK167463">
    <property type="protein sequence ID" value="BAE39548.1"/>
    <property type="molecule type" value="mRNA"/>
</dbReference>
<dbReference type="EMBL" id="BC004672">
    <property type="protein sequence ID" value="AAH04672.1"/>
    <property type="molecule type" value="mRNA"/>
</dbReference>
<dbReference type="EMBL" id="AY376636">
    <property type="protein sequence ID" value="AAQ83379.1"/>
    <property type="molecule type" value="Genomic_DNA"/>
</dbReference>
<dbReference type="CCDS" id="CCDS21119.1">
    <molecule id="Q99KG5-1"/>
</dbReference>
<dbReference type="CCDS" id="CCDS52185.1">
    <molecule id="Q99KG5-3"/>
</dbReference>
<dbReference type="CCDS" id="CCDS52186.1">
    <molecule id="Q99KG5-2"/>
</dbReference>
<dbReference type="RefSeq" id="NP_001157656.1">
    <molecule id="Q99KG5-2"/>
    <property type="nucleotide sequence ID" value="NM_001164184.1"/>
</dbReference>
<dbReference type="RefSeq" id="NP_001157657.1">
    <molecule id="Q99KG5-3"/>
    <property type="nucleotide sequence ID" value="NM_001164185.1"/>
</dbReference>
<dbReference type="RefSeq" id="NP_059101.1">
    <molecule id="Q99KG5-1"/>
    <property type="nucleotide sequence ID" value="NM_017405.2"/>
</dbReference>
<dbReference type="BioGRID" id="207572">
    <property type="interactions" value="1"/>
</dbReference>
<dbReference type="FunCoup" id="Q99KG5">
    <property type="interactions" value="103"/>
</dbReference>
<dbReference type="IntAct" id="Q99KG5">
    <property type="interactions" value="2"/>
</dbReference>
<dbReference type="MINT" id="Q99KG5"/>
<dbReference type="STRING" id="10090.ENSMUSP00000001279"/>
<dbReference type="iPTMnet" id="Q99KG5"/>
<dbReference type="PhosphoSitePlus" id="Q99KG5"/>
<dbReference type="SwissPalm" id="Q99KG5"/>
<dbReference type="jPOST" id="Q99KG5"/>
<dbReference type="PaxDb" id="10090-ENSMUSP00000001279"/>
<dbReference type="PeptideAtlas" id="Q99KG5"/>
<dbReference type="ProteomicsDB" id="293406">
    <molecule id="Q99KG5-1"/>
</dbReference>
<dbReference type="ProteomicsDB" id="293407">
    <molecule id="Q99KG5-2"/>
</dbReference>
<dbReference type="ProteomicsDB" id="293408">
    <molecule id="Q99KG5-3"/>
</dbReference>
<dbReference type="Antibodypedia" id="1523">
    <property type="antibodies" value="222 antibodies from 31 providers"/>
</dbReference>
<dbReference type="DNASU" id="54135"/>
<dbReference type="Ensembl" id="ENSMUST00000001279.15">
    <molecule id="Q99KG5-1"/>
    <property type="protein sequence ID" value="ENSMUSP00000001279.8"/>
    <property type="gene ID" value="ENSMUSG00000001247.17"/>
</dbReference>
<dbReference type="Ensembl" id="ENSMUST00000098553.11">
    <molecule id="Q99KG5-3"/>
    <property type="protein sequence ID" value="ENSMUSP00000096153.5"/>
    <property type="gene ID" value="ENSMUSG00000001247.17"/>
</dbReference>
<dbReference type="Ensembl" id="ENSMUST00000108116.10">
    <molecule id="Q99KG5-2"/>
    <property type="protein sequence ID" value="ENSMUSP00000103751.4"/>
    <property type="gene ID" value="ENSMUSG00000001247.17"/>
</dbReference>
<dbReference type="Ensembl" id="ENSMUST00000205961.2">
    <molecule id="Q99KG5-1"/>
    <property type="protein sequence ID" value="ENSMUSP00000146120.2"/>
    <property type="gene ID" value="ENSMUSG00000001247.17"/>
</dbReference>
<dbReference type="GeneID" id="54135"/>
<dbReference type="KEGG" id="mmu:54135"/>
<dbReference type="UCSC" id="uc009ghj.2">
    <molecule id="Q99KG5-1"/>
    <property type="organism name" value="mouse"/>
</dbReference>
<dbReference type="UCSC" id="uc009ghk.2">
    <molecule id="Q99KG5-2"/>
    <property type="organism name" value="mouse"/>
</dbReference>
<dbReference type="UCSC" id="uc009ghl.2">
    <molecule id="Q99KG5-3"/>
    <property type="organism name" value="mouse"/>
</dbReference>
<dbReference type="AGR" id="MGI:1927471"/>
<dbReference type="CTD" id="51599"/>
<dbReference type="MGI" id="MGI:1927471">
    <property type="gene designation" value="Lsr"/>
</dbReference>
<dbReference type="VEuPathDB" id="HostDB:ENSMUSG00000001247"/>
<dbReference type="eggNOG" id="ENOG502QWP5">
    <property type="taxonomic scope" value="Eukaryota"/>
</dbReference>
<dbReference type="GeneTree" id="ENSGT00950000183058"/>
<dbReference type="HOGENOM" id="CLU_028969_2_0_1"/>
<dbReference type="InParanoid" id="Q99KG5"/>
<dbReference type="OMA" id="DWLFVVM"/>
<dbReference type="OrthoDB" id="9450321at2759"/>
<dbReference type="PhylomeDB" id="Q99KG5"/>
<dbReference type="TreeFam" id="TF330877"/>
<dbReference type="BioGRID-ORCS" id="54135">
    <property type="hits" value="4 hits in 81 CRISPR screens"/>
</dbReference>
<dbReference type="ChiTaRS" id="Lsr">
    <property type="organism name" value="mouse"/>
</dbReference>
<dbReference type="PRO" id="PR:Q99KG5"/>
<dbReference type="Proteomes" id="UP000000589">
    <property type="component" value="Chromosome 7"/>
</dbReference>
<dbReference type="RNAct" id="Q99KG5">
    <property type="molecule type" value="protein"/>
</dbReference>
<dbReference type="Bgee" id="ENSMUSG00000001247">
    <property type="expression patterns" value="Expressed in mucosa of stomach and 206 other cell types or tissues"/>
</dbReference>
<dbReference type="ExpressionAtlas" id="Q99KG5">
    <property type="expression patterns" value="baseline and differential"/>
</dbReference>
<dbReference type="GO" id="GO:0005923">
    <property type="term" value="C:bicellular tight junction"/>
    <property type="evidence" value="ECO:0007669"/>
    <property type="project" value="UniProtKB-SubCell"/>
</dbReference>
<dbReference type="GO" id="GO:0042627">
    <property type="term" value="C:chylomicron"/>
    <property type="evidence" value="ECO:0007669"/>
    <property type="project" value="UniProtKB-KW"/>
</dbReference>
<dbReference type="GO" id="GO:0034362">
    <property type="term" value="C:low-density lipoprotein particle"/>
    <property type="evidence" value="ECO:0007669"/>
    <property type="project" value="UniProtKB-KW"/>
</dbReference>
<dbReference type="GO" id="GO:0005886">
    <property type="term" value="C:plasma membrane"/>
    <property type="evidence" value="ECO:0000314"/>
    <property type="project" value="HGNC-UCL"/>
</dbReference>
<dbReference type="GO" id="GO:0070160">
    <property type="term" value="C:tight junction"/>
    <property type="evidence" value="ECO:0000314"/>
    <property type="project" value="UniProtKB"/>
</dbReference>
<dbReference type="GO" id="GO:0061689">
    <property type="term" value="C:tricellular tight junction"/>
    <property type="evidence" value="ECO:0000314"/>
    <property type="project" value="MGI"/>
</dbReference>
<dbReference type="GO" id="GO:0034361">
    <property type="term" value="C:very-low-density lipoprotein particle"/>
    <property type="evidence" value="ECO:0007669"/>
    <property type="project" value="UniProtKB-KW"/>
</dbReference>
<dbReference type="GO" id="GO:0030228">
    <property type="term" value="F:lipoprotein particle receptor activity"/>
    <property type="evidence" value="ECO:0000304"/>
    <property type="project" value="HGNC-UCL"/>
</dbReference>
<dbReference type="GO" id="GO:0030169">
    <property type="term" value="F:low-density lipoprotein particle binding"/>
    <property type="evidence" value="ECO:0000304"/>
    <property type="project" value="HGNC-UCL"/>
</dbReference>
<dbReference type="GO" id="GO:0010669">
    <property type="term" value="P:epithelial structure maintenance"/>
    <property type="evidence" value="ECO:0000314"/>
    <property type="project" value="UniProtKB"/>
</dbReference>
<dbReference type="GO" id="GO:0060856">
    <property type="term" value="P:establishment of blood-brain barrier"/>
    <property type="evidence" value="ECO:0000315"/>
    <property type="project" value="UniProtKB"/>
</dbReference>
<dbReference type="GO" id="GO:0061436">
    <property type="term" value="P:establishment of skin barrier"/>
    <property type="evidence" value="ECO:0000314"/>
    <property type="project" value="ARUK-UCL"/>
</dbReference>
<dbReference type="GO" id="GO:0042953">
    <property type="term" value="P:lipoprotein transport"/>
    <property type="evidence" value="ECO:0000304"/>
    <property type="project" value="HGNC-UCL"/>
</dbReference>
<dbReference type="GO" id="GO:0001889">
    <property type="term" value="P:liver development"/>
    <property type="evidence" value="ECO:0000315"/>
    <property type="project" value="HGNC-UCL"/>
</dbReference>
<dbReference type="GO" id="GO:0061833">
    <property type="term" value="P:protein localization to tricellular tight junction"/>
    <property type="evidence" value="ECO:0000314"/>
    <property type="project" value="MGI"/>
</dbReference>
<dbReference type="GO" id="GO:0019216">
    <property type="term" value="P:regulation of lipid metabolic process"/>
    <property type="evidence" value="ECO:0007669"/>
    <property type="project" value="Ensembl"/>
</dbReference>
<dbReference type="GO" id="GO:1904274">
    <property type="term" value="P:tricellular tight junction assembly"/>
    <property type="evidence" value="ECO:0000314"/>
    <property type="project" value="ARUK-UCL"/>
</dbReference>
<dbReference type="Gene3D" id="2.60.40.10">
    <property type="entry name" value="Immunoglobulins"/>
    <property type="match status" value="1"/>
</dbReference>
<dbReference type="InterPro" id="IPR036179">
    <property type="entry name" value="Ig-like_dom_sf"/>
</dbReference>
<dbReference type="InterPro" id="IPR051874">
    <property type="entry name" value="Ig-like_domain-LISCH7"/>
</dbReference>
<dbReference type="InterPro" id="IPR013783">
    <property type="entry name" value="Ig-like_fold"/>
</dbReference>
<dbReference type="InterPro" id="IPR003599">
    <property type="entry name" value="Ig_sub"/>
</dbReference>
<dbReference type="InterPro" id="IPR008664">
    <property type="entry name" value="LISCH7"/>
</dbReference>
<dbReference type="PANTHER" id="PTHR15923:SF1">
    <property type="entry name" value="LIPOLYSIS-STIMULATED LIPOPROTEIN RECEPTOR"/>
    <property type="match status" value="1"/>
</dbReference>
<dbReference type="PANTHER" id="PTHR15923">
    <property type="entry name" value="TRANSMEMBRANE AND IMMUNOGLOBULIN DOMAIN-CONTAINING PROTEIN"/>
    <property type="match status" value="1"/>
</dbReference>
<dbReference type="Pfam" id="PF05624">
    <property type="entry name" value="LSR"/>
    <property type="match status" value="1"/>
</dbReference>
<dbReference type="SMART" id="SM00409">
    <property type="entry name" value="IG"/>
    <property type="match status" value="1"/>
</dbReference>
<dbReference type="SUPFAM" id="SSF48726">
    <property type="entry name" value="Immunoglobulin"/>
    <property type="match status" value="1"/>
</dbReference>
<accession>Q99KG5</accession>
<accession>Q3TJE7</accession>
<accession>Q3UIQ9</accession>
<accession>Q61148</accession>
<accession>Q61149</accession>
<accession>Q6U816</accession>
<keyword id="KW-0025">Alternative splicing</keyword>
<keyword id="KW-0965">Cell junction</keyword>
<keyword id="KW-1003">Cell membrane</keyword>
<keyword id="KW-0162">Chylomicron</keyword>
<keyword id="KW-1015">Disulfide bond</keyword>
<keyword id="KW-0393">Immunoglobulin domain</keyword>
<keyword id="KW-1017">Isopeptide bond</keyword>
<keyword id="KW-0427">LDL</keyword>
<keyword id="KW-0472">Membrane</keyword>
<keyword id="KW-0597">Phosphoprotein</keyword>
<keyword id="KW-0675">Receptor</keyword>
<keyword id="KW-1185">Reference proteome</keyword>
<keyword id="KW-0732">Signal</keyword>
<keyword id="KW-0796">Tight junction</keyword>
<keyword id="KW-0812">Transmembrane</keyword>
<keyword id="KW-1133">Transmembrane helix</keyword>
<keyword id="KW-0832">Ubl conjugation</keyword>
<keyword id="KW-0850">VLDL</keyword>
<evidence type="ECO:0000250" key="1"/>
<evidence type="ECO:0000250" key="2">
    <source>
        <dbReference type="UniProtKB" id="Q86X29"/>
    </source>
</evidence>
<evidence type="ECO:0000250" key="3">
    <source>
        <dbReference type="UniProtKB" id="Q9WU74"/>
    </source>
</evidence>
<evidence type="ECO:0000255" key="4"/>
<evidence type="ECO:0000255" key="5">
    <source>
        <dbReference type="PROSITE-ProRule" id="PRU00114"/>
    </source>
</evidence>
<evidence type="ECO:0000256" key="6">
    <source>
        <dbReference type="SAM" id="MobiDB-lite"/>
    </source>
</evidence>
<evidence type="ECO:0000269" key="7">
    <source>
    </source>
</evidence>
<evidence type="ECO:0000269" key="8">
    <source>
    </source>
</evidence>
<evidence type="ECO:0000269" key="9">
    <source>
    </source>
</evidence>
<evidence type="ECO:0000269" key="10">
    <source>
    </source>
</evidence>
<evidence type="ECO:0000269" key="11">
    <source>
    </source>
</evidence>
<evidence type="ECO:0000303" key="12">
    <source>
    </source>
</evidence>
<evidence type="ECO:0000303" key="13">
    <source>
    </source>
</evidence>
<evidence type="ECO:0000305" key="14"/>
<evidence type="ECO:0000312" key="15">
    <source>
        <dbReference type="MGI" id="MGI:1927471"/>
    </source>
</evidence>
<evidence type="ECO:0007744" key="16">
    <source>
    </source>
</evidence>
<evidence type="ECO:0007744" key="17">
    <source>
    </source>
</evidence>
<name>LSR_MOUSE</name>
<sequence length="594" mass="66108">MAPAASACAGAPGSHPATTIFVCLFLIIYCPDRASAIQVTVPDPYHVVILFQPVTLHCTYQMSNTLTAPIVIWKYKSFCRDRVADAFSPASVDNQLNAQLAAGNPGYNPYVECQDSVRTVRVVATKQGNAVTLGDYYQGRRITITGNADLTFEQTAWGDSGVYYCSVVSAQDLDGNNEAYAELIVLGRTSEAPELLPGFRAGPLEDWLFVVVVCLASLLFFLLLGICWCQCCPHTCCCYVRCPCCPDKCCCPEALYAAGKAATSGVPSIYAPSIYTHLSPAKTPPPPPAMIPMRPPYGYPGDFDRTSSVGGHSSQVPLLREVDGSVSSEVRSGYRIQANQQDDSMRVLYYMEKELANFDPSRPGPPNGRVERAMSEVTSLHEDDWRSRPSRAPALTPIRDEEWNRHSPRSPRTWEQEPLQEQPRGGWGSGRPRARSVDALDDINRPGSTESGRSSPPSSGRRGRAYAPPRSRSRDDLYDPDDPRDLPHSRDPHYYDDLRSRDPRADPRSRQRSHDPRDAGFRSRDPQYDGRLLEEALKKKGAGERRRVYREEEEEEEEGHYPPAPPPYSETDSQASRERRMKKNLALSRESLVV</sequence>
<reference key="1">
    <citation type="submission" date="1996-02" db="EMBL/GenBank/DDBJ databases">
        <title>Lisch7, a liver-specific gene immediately upstream of the USF2 gene on mouse chromosome 7.</title>
        <authorList>
            <person name="Lin Q."/>
            <person name="Ooi K.S."/>
            <person name="Sawadogo M."/>
        </authorList>
    </citation>
    <scope>NUCLEOTIDE SEQUENCE [MRNA] (ISOFORM 1)</scope>
    <scope>NUCLEOTIDE SEQUENCE [GENOMIC DNA] OF 256-594</scope>
    <source>
        <strain>C57BL/6 X CBA</strain>
    </source>
</reference>
<reference key="2">
    <citation type="journal article" date="2005" name="Science">
        <title>The transcriptional landscape of the mammalian genome.</title>
        <authorList>
            <person name="Carninci P."/>
            <person name="Kasukawa T."/>
            <person name="Katayama S."/>
            <person name="Gough J."/>
            <person name="Frith M.C."/>
            <person name="Maeda N."/>
            <person name="Oyama R."/>
            <person name="Ravasi T."/>
            <person name="Lenhard B."/>
            <person name="Wells C."/>
            <person name="Kodzius R."/>
            <person name="Shimokawa K."/>
            <person name="Bajic V.B."/>
            <person name="Brenner S.E."/>
            <person name="Batalov S."/>
            <person name="Forrest A.R."/>
            <person name="Zavolan M."/>
            <person name="Davis M.J."/>
            <person name="Wilming L.G."/>
            <person name="Aidinis V."/>
            <person name="Allen J.E."/>
            <person name="Ambesi-Impiombato A."/>
            <person name="Apweiler R."/>
            <person name="Aturaliya R.N."/>
            <person name="Bailey T.L."/>
            <person name="Bansal M."/>
            <person name="Baxter L."/>
            <person name="Beisel K.W."/>
            <person name="Bersano T."/>
            <person name="Bono H."/>
            <person name="Chalk A.M."/>
            <person name="Chiu K.P."/>
            <person name="Choudhary V."/>
            <person name="Christoffels A."/>
            <person name="Clutterbuck D.R."/>
            <person name="Crowe M.L."/>
            <person name="Dalla E."/>
            <person name="Dalrymple B.P."/>
            <person name="de Bono B."/>
            <person name="Della Gatta G."/>
            <person name="di Bernardo D."/>
            <person name="Down T."/>
            <person name="Engstrom P."/>
            <person name="Fagiolini M."/>
            <person name="Faulkner G."/>
            <person name="Fletcher C.F."/>
            <person name="Fukushima T."/>
            <person name="Furuno M."/>
            <person name="Futaki S."/>
            <person name="Gariboldi M."/>
            <person name="Georgii-Hemming P."/>
            <person name="Gingeras T.R."/>
            <person name="Gojobori T."/>
            <person name="Green R.E."/>
            <person name="Gustincich S."/>
            <person name="Harbers M."/>
            <person name="Hayashi Y."/>
            <person name="Hensch T.K."/>
            <person name="Hirokawa N."/>
            <person name="Hill D."/>
            <person name="Huminiecki L."/>
            <person name="Iacono M."/>
            <person name="Ikeo K."/>
            <person name="Iwama A."/>
            <person name="Ishikawa T."/>
            <person name="Jakt M."/>
            <person name="Kanapin A."/>
            <person name="Katoh M."/>
            <person name="Kawasawa Y."/>
            <person name="Kelso J."/>
            <person name="Kitamura H."/>
            <person name="Kitano H."/>
            <person name="Kollias G."/>
            <person name="Krishnan S.P."/>
            <person name="Kruger A."/>
            <person name="Kummerfeld S.K."/>
            <person name="Kurochkin I.V."/>
            <person name="Lareau L.F."/>
            <person name="Lazarevic D."/>
            <person name="Lipovich L."/>
            <person name="Liu J."/>
            <person name="Liuni S."/>
            <person name="McWilliam S."/>
            <person name="Madan Babu M."/>
            <person name="Madera M."/>
            <person name="Marchionni L."/>
            <person name="Matsuda H."/>
            <person name="Matsuzawa S."/>
            <person name="Miki H."/>
            <person name="Mignone F."/>
            <person name="Miyake S."/>
            <person name="Morris K."/>
            <person name="Mottagui-Tabar S."/>
            <person name="Mulder N."/>
            <person name="Nakano N."/>
            <person name="Nakauchi H."/>
            <person name="Ng P."/>
            <person name="Nilsson R."/>
            <person name="Nishiguchi S."/>
            <person name="Nishikawa S."/>
            <person name="Nori F."/>
            <person name="Ohara O."/>
            <person name="Okazaki Y."/>
            <person name="Orlando V."/>
            <person name="Pang K.C."/>
            <person name="Pavan W.J."/>
            <person name="Pavesi G."/>
            <person name="Pesole G."/>
            <person name="Petrovsky N."/>
            <person name="Piazza S."/>
            <person name="Reed J."/>
            <person name="Reid J.F."/>
            <person name="Ring B.Z."/>
            <person name="Ringwald M."/>
            <person name="Rost B."/>
            <person name="Ruan Y."/>
            <person name="Salzberg S.L."/>
            <person name="Sandelin A."/>
            <person name="Schneider C."/>
            <person name="Schoenbach C."/>
            <person name="Sekiguchi K."/>
            <person name="Semple C.A."/>
            <person name="Seno S."/>
            <person name="Sessa L."/>
            <person name="Sheng Y."/>
            <person name="Shibata Y."/>
            <person name="Shimada H."/>
            <person name="Shimada K."/>
            <person name="Silva D."/>
            <person name="Sinclair B."/>
            <person name="Sperling S."/>
            <person name="Stupka E."/>
            <person name="Sugiura K."/>
            <person name="Sultana R."/>
            <person name="Takenaka Y."/>
            <person name="Taki K."/>
            <person name="Tammoja K."/>
            <person name="Tan S.L."/>
            <person name="Tang S."/>
            <person name="Taylor M.S."/>
            <person name="Tegner J."/>
            <person name="Teichmann S.A."/>
            <person name="Ueda H.R."/>
            <person name="van Nimwegen E."/>
            <person name="Verardo R."/>
            <person name="Wei C.L."/>
            <person name="Yagi K."/>
            <person name="Yamanishi H."/>
            <person name="Zabarovsky E."/>
            <person name="Zhu S."/>
            <person name="Zimmer A."/>
            <person name="Hide W."/>
            <person name="Bult C."/>
            <person name="Grimmond S.M."/>
            <person name="Teasdale R.D."/>
            <person name="Liu E.T."/>
            <person name="Brusic V."/>
            <person name="Quackenbush J."/>
            <person name="Wahlestedt C."/>
            <person name="Mattick J.S."/>
            <person name="Hume D.A."/>
            <person name="Kai C."/>
            <person name="Sasaki D."/>
            <person name="Tomaru Y."/>
            <person name="Fukuda S."/>
            <person name="Kanamori-Katayama M."/>
            <person name="Suzuki M."/>
            <person name="Aoki J."/>
            <person name="Arakawa T."/>
            <person name="Iida J."/>
            <person name="Imamura K."/>
            <person name="Itoh M."/>
            <person name="Kato T."/>
            <person name="Kawaji H."/>
            <person name="Kawagashira N."/>
            <person name="Kawashima T."/>
            <person name="Kojima M."/>
            <person name="Kondo S."/>
            <person name="Konno H."/>
            <person name="Nakano K."/>
            <person name="Ninomiya N."/>
            <person name="Nishio T."/>
            <person name="Okada M."/>
            <person name="Plessy C."/>
            <person name="Shibata K."/>
            <person name="Shiraki T."/>
            <person name="Suzuki S."/>
            <person name="Tagami M."/>
            <person name="Waki K."/>
            <person name="Watahiki A."/>
            <person name="Okamura-Oho Y."/>
            <person name="Suzuki H."/>
            <person name="Kawai J."/>
            <person name="Hayashizaki Y."/>
        </authorList>
    </citation>
    <scope>NUCLEOTIDE SEQUENCE [LARGE SCALE MRNA] (ISOFORMS 2 AND 3)</scope>
    <source>
        <strain>C57BL/6J</strain>
        <tissue>Amnion</tissue>
        <tissue>Placenta</tissue>
    </source>
</reference>
<reference key="3">
    <citation type="journal article" date="2004" name="Genome Res.">
        <title>The status, quality, and expansion of the NIH full-length cDNA project: the Mammalian Gene Collection (MGC).</title>
        <authorList>
            <consortium name="The MGC Project Team"/>
        </authorList>
    </citation>
    <scope>NUCLEOTIDE SEQUENCE [LARGE SCALE MRNA] (ISOFORM 1)</scope>
    <source>
        <strain>FVB/N</strain>
        <tissue>Mammary tumor</tissue>
    </source>
</reference>
<reference key="4">
    <citation type="journal article" date="2004" name="Eur. J. Biochem.">
        <title>Distribution of the lipolysis stimulated receptor in adult and embryonic murine tissues and lethality of LSR-/- embryos at 12.5 to 14.5 days of gestation.</title>
        <authorList>
            <person name="Mesli S."/>
            <person name="Javorschi S."/>
            <person name="Berard A.M."/>
            <person name="Landry M."/>
            <person name="Priddle H."/>
            <person name="Kivlichan D."/>
            <person name="Smith A.J.H."/>
            <person name="Yen F.T."/>
            <person name="Bihain B.E."/>
            <person name="Darmon M."/>
        </authorList>
    </citation>
    <scope>NUCLEOTIDE SEQUENCE [GENOMIC DNA] OF 1-576</scope>
    <scope>FUNCTION</scope>
    <scope>TISSUE SPECIFICITY</scope>
    <scope>DEVELOPMENTAL STAGE</scope>
    <scope>DISRUPTION PHENOTYPE</scope>
    <source>
        <strain>129/Ola</strain>
    </source>
</reference>
<reference key="5">
    <citation type="journal article" date="2007" name="Proc. Natl. Acad. Sci. U.S.A.">
        <title>Large-scale phosphorylation analysis of mouse liver.</title>
        <authorList>
            <person name="Villen J."/>
            <person name="Beausoleil S.A."/>
            <person name="Gerber S.A."/>
            <person name="Gygi S.P."/>
        </authorList>
    </citation>
    <scope>PHOSPHORYLATION [LARGE SCALE ANALYSIS] AT SER-308 AND SER-588</scope>
    <scope>IDENTIFICATION BY MASS SPECTROMETRY [LARGE SCALE ANALYSIS]</scope>
    <source>
        <tissue>Liver</tissue>
    </source>
</reference>
<reference key="6">
    <citation type="journal article" date="2010" name="Cell">
        <title>A tissue-specific atlas of mouse protein phosphorylation and expression.</title>
        <authorList>
            <person name="Huttlin E.L."/>
            <person name="Jedrychowski M.P."/>
            <person name="Elias J.E."/>
            <person name="Goswami T."/>
            <person name="Rad R."/>
            <person name="Beausoleil S.A."/>
            <person name="Villen J."/>
            <person name="Haas W."/>
            <person name="Sowa M.E."/>
            <person name="Gygi S.P."/>
        </authorList>
    </citation>
    <scope>PHOSPHORYLATION [LARGE SCALE ANALYSIS] AT SER-375 AND SER-379</scope>
    <scope>IDENTIFICATION BY MASS SPECTROMETRY [LARGE SCALE ANALYSIS]</scope>
    <source>
        <tissue>Liver</tissue>
        <tissue>Testis</tissue>
    </source>
</reference>
<reference key="7">
    <citation type="journal article" date="2011" name="J. Cell Sci.">
        <title>LSR defines cell corners for tricellular tight junction formation in epithelial cells.</title>
        <authorList>
            <person name="Masuda S."/>
            <person name="Oda Y."/>
            <person name="Sasaki H."/>
            <person name="Ikenouchi J."/>
            <person name="Higashi T."/>
            <person name="Akashi M."/>
            <person name="Nishi E."/>
            <person name="Furuse M."/>
        </authorList>
    </citation>
    <scope>FUNCTION</scope>
    <scope>SUBCELLULAR LOCATION</scope>
    <scope>TISSUE SPECIFICITY</scope>
    <scope>SUBUNIT</scope>
    <scope>INTERACTION WITH MARVELD2</scope>
</reference>
<reference key="8">
    <citation type="journal article" date="2013" name="J. Cell Sci.">
        <title>Analysis of the 'angulin' proteins LSR, ILDR1 and ILDR2--tricellulin recruitment, epithelial barrier function and implication in deafness pathogenesis.</title>
        <authorList>
            <person name="Higashi T."/>
            <person name="Tokuda S."/>
            <person name="Kitajiri S."/>
            <person name="Masuda S."/>
            <person name="Nakamura H."/>
            <person name="Oda Y."/>
            <person name="Furuse M."/>
        </authorList>
    </citation>
    <scope>FUNCTION</scope>
    <scope>TISSUE SPECIFICITY (ISOFORM 2)</scope>
    <scope>SUBCELLULAR LOCATION</scope>
    <scope>INTERACTION WITH MARVELD2 AND OCLN</scope>
</reference>
<reference key="9">
    <citation type="journal article" date="2014" name="Genes Cells">
        <title>JNK1/2-dependent phosphorylation of angulin-1/LSR is required for the exclusive localization of angulin-1/LSR and tricellulin at tricellular contacts in EpH4 epithelial sheet.</title>
        <authorList>
            <person name="Nakatsu D."/>
            <person name="Kano F."/>
            <person name="Taguchi Y."/>
            <person name="Sugawara T."/>
            <person name="Nishizono T."/>
            <person name="Nishikawa K."/>
            <person name="Oda Y."/>
            <person name="Furuse M."/>
            <person name="Murata M."/>
        </authorList>
    </citation>
    <scope>SUBCELLULAR LOCATION</scope>
    <scope>PHOSPHORYLATION AT SER-308</scope>
    <scope>MUTAGENESIS OF SER-308</scope>
</reference>
<reference key="10">
    <citation type="journal article" date="2019" name="Genet. Med.">
        <title>Identification of novel loci for pediatric cholestatic liver disease defined by KIF12, PPM1F, USP53, LSR, and WDR83OS pathogenic variants.</title>
        <authorList>
            <person name="Maddirevula S."/>
            <person name="Alhebbi H."/>
            <person name="Alqahtani A."/>
            <person name="Algoufi T."/>
            <person name="Alsaif H.S."/>
            <person name="Ibrahim N."/>
            <person name="Abdulwahab F."/>
            <person name="Barr M."/>
            <person name="Alzaidan H."/>
            <person name="Almehaideb A."/>
            <person name="AlSasi O."/>
            <person name="Alhashem A."/>
            <person name="Hussaini H.A."/>
            <person name="Wali S."/>
            <person name="Alkuraya F.S."/>
        </authorList>
    </citation>
    <scope>TISSUE SPECIFICITY</scope>
</reference>
<protein>
    <recommendedName>
        <fullName evidence="14">Lipolysis-stimulated lipoprotein receptor</fullName>
    </recommendedName>
    <alternativeName>
        <fullName evidence="13">Angulin-3</fullName>
    </alternativeName>
    <alternativeName>
        <fullName>Lipolysis-stimulated receptor</fullName>
    </alternativeName>
    <alternativeName>
        <fullName>Liver-specific bHLH-Zip transcription factor</fullName>
    </alternativeName>
    <alternativeName>
        <fullName>Liver-specific gene on mouse chromosome 7 protein</fullName>
    </alternativeName>
</protein>
<comment type="function">
    <text evidence="7 8 9">Probable role in the clearance of triglyceride-rich lipoprotein from blood. Binds chylomicrons, LDL and VLDL in presence of free fatty acids and allows their subsequent uptake in the cells (PubMed:15265030). Maintains epithelial barrier function by recruiting MARVELD2/tricellulin to tricellular tight junctions (PubMed:21245199, PubMed:23239027).</text>
</comment>
<comment type="subunit">
    <text evidence="1 3 8 9">Homotrimer or homotetramer (By similarity). Assembles into cell-cell contacts (PubMed:21245199). Interacts (via the cytoplasmic domain) with MARVELD2 (via C-terminal cytoplasmic domain); the interaction is required to recruit MARVELD2 to tricellular contacts (PubMed:21245199, PubMed:23239027). Interacts with OCLN (PubMed:23239027).</text>
</comment>
<comment type="subcellular location">
    <subcellularLocation>
        <location evidence="8">Cell membrane</location>
        <topology evidence="4">Single-pass type I membrane protein</topology>
    </subcellularLocation>
    <subcellularLocation>
        <location evidence="8 9 10">Cell junction</location>
        <location evidence="8 9 10">Tight junction</location>
    </subcellularLocation>
    <text evidence="8 9 10">Located at tricellular contacts.</text>
</comment>
<comment type="alternative products">
    <event type="alternative splicing"/>
    <isoform>
        <id>Q99KG5-1</id>
        <name>1</name>
        <sequence type="displayed"/>
    </isoform>
    <isoform>
        <id>Q99KG5-2</id>
        <name>2</name>
        <sequence type="described" ref="VSP_019696"/>
    </isoform>
    <isoform>
        <id>Q99KG5-3</id>
        <name>3</name>
        <sequence type="described" ref="VSP_019695"/>
    </isoform>
</comment>
<comment type="tissue specificity">
    <text evidence="7 8 9 11">Expressed in epithelial tissues (at protein level) (PubMed:21245199). Specifically expressed in liver and to a lower extent in kidney (at protein level). Also detected in brain, testis, ovaries, adrenal gland, intestine, muscle, and lung. In colon, only expressed in the lower portion of crypts (PubMed:23239027). Expressed in the liver.</text>
</comment>
<comment type="tissue specificity">
    <molecule>Isoform 2</molecule>
    <text evidence="9">Expressed in liver, stomach, small intestine and colon. Also detected in other epithelial tissues.</text>
</comment>
<comment type="developmental stage">
    <text evidence="7">Expressed during embryogenesis (at protein level). Detected from 7.5 dpc to 17 dpc.</text>
</comment>
<comment type="PTM">
    <text evidence="10">Phosphorylation at Ser-308 by MAPK8/JNK1 and MAPK9/JNK2 may be required for exclusive localization at tricellular tight junstions.</text>
</comment>
<comment type="PTM">
    <text evidence="2">Polyubiquitinated at Lys-583 via 'Lys-63'-linked ubiquitin chains; deubiquitinated by USP53.</text>
</comment>
<comment type="disruption phenotype">
    <text evidence="7">Death between 12.5 dpc and 15.5 dpc probably due to impaired liver and embryonic development.</text>
</comment>
<comment type="similarity">
    <text evidence="14">Belongs to the immunoglobulin superfamily. LISCH7 family.</text>
</comment>
<comment type="sequence caution" evidence="14">
    <conflict type="frameshift">
        <sequence resource="EMBL-CDS" id="AAA92719"/>
    </conflict>
</comment>
<proteinExistence type="evidence at protein level"/>